<reference key="1">
    <citation type="journal article" date="2002" name="Nat. Biotechnol.">
        <title>Genome sequence of the dissimilatory metal ion-reducing bacterium Shewanella oneidensis.</title>
        <authorList>
            <person name="Heidelberg J.F."/>
            <person name="Paulsen I.T."/>
            <person name="Nelson K.E."/>
            <person name="Gaidos E.J."/>
            <person name="Nelson W.C."/>
            <person name="Read T.D."/>
            <person name="Eisen J.A."/>
            <person name="Seshadri R."/>
            <person name="Ward N.L."/>
            <person name="Methe B.A."/>
            <person name="Clayton R.A."/>
            <person name="Meyer T."/>
            <person name="Tsapin A."/>
            <person name="Scott J."/>
            <person name="Beanan M.J."/>
            <person name="Brinkac L.M."/>
            <person name="Daugherty S.C."/>
            <person name="DeBoy R.T."/>
            <person name="Dodson R.J."/>
            <person name="Durkin A.S."/>
            <person name="Haft D.H."/>
            <person name="Kolonay J.F."/>
            <person name="Madupu R."/>
            <person name="Peterson J.D."/>
            <person name="Umayam L.A."/>
            <person name="White O."/>
            <person name="Wolf A.M."/>
            <person name="Vamathevan J.J."/>
            <person name="Weidman J.F."/>
            <person name="Impraim M."/>
            <person name="Lee K."/>
            <person name="Berry K.J."/>
            <person name="Lee C."/>
            <person name="Mueller J."/>
            <person name="Khouri H.M."/>
            <person name="Gill J."/>
            <person name="Utterback T.R."/>
            <person name="McDonald L.A."/>
            <person name="Feldblyum T.V."/>
            <person name="Smith H.O."/>
            <person name="Venter J.C."/>
            <person name="Nealson K.H."/>
            <person name="Fraser C.M."/>
        </authorList>
    </citation>
    <scope>NUCLEOTIDE SEQUENCE [LARGE SCALE GENOMIC DNA]</scope>
    <source>
        <strain>ATCC 700550 / JCM 31522 / CIP 106686 / LMG 19005 / NCIMB 14063 / MR-1</strain>
    </source>
</reference>
<organism>
    <name type="scientific">Shewanella oneidensis (strain ATCC 700550 / JCM 31522 / CIP 106686 / LMG 19005 / NCIMB 14063 / MR-1)</name>
    <dbReference type="NCBI Taxonomy" id="211586"/>
    <lineage>
        <taxon>Bacteria</taxon>
        <taxon>Pseudomonadati</taxon>
        <taxon>Pseudomonadota</taxon>
        <taxon>Gammaproteobacteria</taxon>
        <taxon>Alteromonadales</taxon>
        <taxon>Shewanellaceae</taxon>
        <taxon>Shewanella</taxon>
    </lineage>
</organism>
<feature type="chain" id="PRO_0000165592" description="Holliday junction branch migration complex subunit RuvB">
    <location>
        <begin position="1"/>
        <end position="334"/>
    </location>
</feature>
<feature type="region of interest" description="Large ATPase domain (RuvB-L)" evidence="1">
    <location>
        <begin position="4"/>
        <end position="184"/>
    </location>
</feature>
<feature type="region of interest" description="Small ATPAse domain (RuvB-S)" evidence="1">
    <location>
        <begin position="185"/>
        <end position="255"/>
    </location>
</feature>
<feature type="region of interest" description="Head domain (RuvB-H)" evidence="1">
    <location>
        <begin position="258"/>
        <end position="334"/>
    </location>
</feature>
<feature type="binding site" evidence="1">
    <location>
        <position position="24"/>
    </location>
    <ligand>
        <name>ATP</name>
        <dbReference type="ChEBI" id="CHEBI:30616"/>
    </ligand>
</feature>
<feature type="binding site" evidence="1">
    <location>
        <position position="65"/>
    </location>
    <ligand>
        <name>ATP</name>
        <dbReference type="ChEBI" id="CHEBI:30616"/>
    </ligand>
</feature>
<feature type="binding site" evidence="1">
    <location>
        <position position="68"/>
    </location>
    <ligand>
        <name>ATP</name>
        <dbReference type="ChEBI" id="CHEBI:30616"/>
    </ligand>
</feature>
<feature type="binding site" evidence="1">
    <location>
        <position position="69"/>
    </location>
    <ligand>
        <name>ATP</name>
        <dbReference type="ChEBI" id="CHEBI:30616"/>
    </ligand>
</feature>
<feature type="binding site" evidence="1">
    <location>
        <position position="69"/>
    </location>
    <ligand>
        <name>Mg(2+)</name>
        <dbReference type="ChEBI" id="CHEBI:18420"/>
    </ligand>
</feature>
<feature type="binding site" evidence="1">
    <location>
        <position position="70"/>
    </location>
    <ligand>
        <name>ATP</name>
        <dbReference type="ChEBI" id="CHEBI:30616"/>
    </ligand>
</feature>
<feature type="binding site" evidence="1">
    <location>
        <begin position="131"/>
        <end position="133"/>
    </location>
    <ligand>
        <name>ATP</name>
        <dbReference type="ChEBI" id="CHEBI:30616"/>
    </ligand>
</feature>
<feature type="binding site" evidence="1">
    <location>
        <position position="174"/>
    </location>
    <ligand>
        <name>ATP</name>
        <dbReference type="ChEBI" id="CHEBI:30616"/>
    </ligand>
</feature>
<feature type="binding site" evidence="1">
    <location>
        <position position="184"/>
    </location>
    <ligand>
        <name>ATP</name>
        <dbReference type="ChEBI" id="CHEBI:30616"/>
    </ligand>
</feature>
<feature type="binding site" evidence="1">
    <location>
        <position position="221"/>
    </location>
    <ligand>
        <name>ATP</name>
        <dbReference type="ChEBI" id="CHEBI:30616"/>
    </ligand>
</feature>
<feature type="binding site" evidence="1">
    <location>
        <position position="294"/>
    </location>
    <ligand>
        <name>DNA</name>
        <dbReference type="ChEBI" id="CHEBI:16991"/>
    </ligand>
</feature>
<feature type="binding site" evidence="1">
    <location>
        <position position="313"/>
    </location>
    <ligand>
        <name>DNA</name>
        <dbReference type="ChEBI" id="CHEBI:16991"/>
    </ligand>
</feature>
<feature type="binding site" evidence="1">
    <location>
        <position position="318"/>
    </location>
    <ligand>
        <name>DNA</name>
        <dbReference type="ChEBI" id="CHEBI:16991"/>
    </ligand>
</feature>
<protein>
    <recommendedName>
        <fullName evidence="1">Holliday junction branch migration complex subunit RuvB</fullName>
        <ecNumber evidence="1">3.6.4.-</ecNumber>
    </recommendedName>
</protein>
<keyword id="KW-0067">ATP-binding</keyword>
<keyword id="KW-0963">Cytoplasm</keyword>
<keyword id="KW-0227">DNA damage</keyword>
<keyword id="KW-0233">DNA recombination</keyword>
<keyword id="KW-0234">DNA repair</keyword>
<keyword id="KW-0238">DNA-binding</keyword>
<keyword id="KW-0378">Hydrolase</keyword>
<keyword id="KW-0547">Nucleotide-binding</keyword>
<keyword id="KW-1185">Reference proteome</keyword>
<comment type="function">
    <text evidence="1">The RuvA-RuvB-RuvC complex processes Holliday junction (HJ) DNA during genetic recombination and DNA repair, while the RuvA-RuvB complex plays an important role in the rescue of blocked DNA replication forks via replication fork reversal (RFR). RuvA specifically binds to HJ cruciform DNA, conferring on it an open structure. The RuvB hexamer acts as an ATP-dependent pump, pulling dsDNA into and through the RuvAB complex. RuvB forms 2 homohexamers on either side of HJ DNA bound by 1 or 2 RuvA tetramers; 4 subunits per hexamer contact DNA at a time. Coordinated motions by a converter formed by DNA-disengaged RuvB subunits stimulates ATP hydrolysis and nucleotide exchange. Immobilization of the converter enables RuvB to convert the ATP-contained energy into a lever motion, pulling 2 nucleotides of DNA out of the RuvA tetramer per ATP hydrolyzed, thus driving DNA branch migration. The RuvB motors rotate together with the DNA substrate, which together with the progressing nucleotide cycle form the mechanistic basis for DNA recombination by continuous HJ branch migration. Branch migration allows RuvC to scan DNA until it finds its consensus sequence, where it cleaves and resolves cruciform DNA.</text>
</comment>
<comment type="catalytic activity">
    <reaction evidence="1">
        <text>ATP + H2O = ADP + phosphate + H(+)</text>
        <dbReference type="Rhea" id="RHEA:13065"/>
        <dbReference type="ChEBI" id="CHEBI:15377"/>
        <dbReference type="ChEBI" id="CHEBI:15378"/>
        <dbReference type="ChEBI" id="CHEBI:30616"/>
        <dbReference type="ChEBI" id="CHEBI:43474"/>
        <dbReference type="ChEBI" id="CHEBI:456216"/>
    </reaction>
</comment>
<comment type="subunit">
    <text evidence="1">Homohexamer. Forms an RuvA(8)-RuvB(12)-Holliday junction (HJ) complex. HJ DNA is sandwiched between 2 RuvA tetramers; dsDNA enters through RuvA and exits via RuvB. An RuvB hexamer assembles on each DNA strand where it exits the tetramer. Each RuvB hexamer is contacted by two RuvA subunits (via domain III) on 2 adjacent RuvB subunits; this complex drives branch migration. In the full resolvosome a probable DNA-RuvA(4)-RuvB(12)-RuvC(2) complex forms which resolves the HJ.</text>
</comment>
<comment type="subcellular location">
    <subcellularLocation>
        <location evidence="1">Cytoplasm</location>
    </subcellularLocation>
</comment>
<comment type="domain">
    <text evidence="1">Has 3 domains, the large (RuvB-L) and small ATPase (RuvB-S) domains and the C-terminal head (RuvB-H) domain. The head domain binds DNA, while the ATPase domains jointly bind ATP, ADP or are empty depending on the state of the subunit in the translocation cycle. During a single DNA translocation step the structure of each domain remains the same, but their relative positions change.</text>
</comment>
<comment type="similarity">
    <text evidence="1">Belongs to the RuvB family.</text>
</comment>
<name>RUVB_SHEON</name>
<accession>Q8EEF3</accession>
<proteinExistence type="inferred from homology"/>
<evidence type="ECO:0000255" key="1">
    <source>
        <dbReference type="HAMAP-Rule" id="MF_00016"/>
    </source>
</evidence>
<dbReference type="EC" id="3.6.4.-" evidence="1"/>
<dbReference type="EMBL" id="AE014299">
    <property type="protein sequence ID" value="AAN55463.1"/>
    <property type="molecule type" value="Genomic_DNA"/>
</dbReference>
<dbReference type="RefSeq" id="NP_718019.1">
    <property type="nucleotide sequence ID" value="NC_004347.2"/>
</dbReference>
<dbReference type="RefSeq" id="WP_011072404.1">
    <property type="nucleotide sequence ID" value="NC_004347.2"/>
</dbReference>
<dbReference type="SMR" id="Q8EEF3"/>
<dbReference type="STRING" id="211586.SO_2429"/>
<dbReference type="PaxDb" id="211586-SO_2429"/>
<dbReference type="KEGG" id="son:SO_2429"/>
<dbReference type="PATRIC" id="fig|211586.12.peg.2336"/>
<dbReference type="eggNOG" id="COG2255">
    <property type="taxonomic scope" value="Bacteria"/>
</dbReference>
<dbReference type="HOGENOM" id="CLU_055599_1_0_6"/>
<dbReference type="OrthoDB" id="9804478at2"/>
<dbReference type="PhylomeDB" id="Q8EEF3"/>
<dbReference type="BioCyc" id="SONE211586:G1GMP-2219-MONOMER"/>
<dbReference type="Proteomes" id="UP000008186">
    <property type="component" value="Chromosome"/>
</dbReference>
<dbReference type="GO" id="GO:0005737">
    <property type="term" value="C:cytoplasm"/>
    <property type="evidence" value="ECO:0007669"/>
    <property type="project" value="UniProtKB-SubCell"/>
</dbReference>
<dbReference type="GO" id="GO:0048476">
    <property type="term" value="C:Holliday junction resolvase complex"/>
    <property type="evidence" value="ECO:0007669"/>
    <property type="project" value="UniProtKB-UniRule"/>
</dbReference>
<dbReference type="GO" id="GO:0005524">
    <property type="term" value="F:ATP binding"/>
    <property type="evidence" value="ECO:0007669"/>
    <property type="project" value="UniProtKB-UniRule"/>
</dbReference>
<dbReference type="GO" id="GO:0016887">
    <property type="term" value="F:ATP hydrolysis activity"/>
    <property type="evidence" value="ECO:0007669"/>
    <property type="project" value="InterPro"/>
</dbReference>
<dbReference type="GO" id="GO:0000400">
    <property type="term" value="F:four-way junction DNA binding"/>
    <property type="evidence" value="ECO:0007669"/>
    <property type="project" value="UniProtKB-UniRule"/>
</dbReference>
<dbReference type="GO" id="GO:0009378">
    <property type="term" value="F:four-way junction helicase activity"/>
    <property type="evidence" value="ECO:0007669"/>
    <property type="project" value="InterPro"/>
</dbReference>
<dbReference type="GO" id="GO:0006310">
    <property type="term" value="P:DNA recombination"/>
    <property type="evidence" value="ECO:0007669"/>
    <property type="project" value="UniProtKB-UniRule"/>
</dbReference>
<dbReference type="GO" id="GO:0006281">
    <property type="term" value="P:DNA repair"/>
    <property type="evidence" value="ECO:0007669"/>
    <property type="project" value="UniProtKB-UniRule"/>
</dbReference>
<dbReference type="CDD" id="cd00009">
    <property type="entry name" value="AAA"/>
    <property type="match status" value="1"/>
</dbReference>
<dbReference type="FunFam" id="1.10.10.10:FF:000086">
    <property type="entry name" value="Holliday junction ATP-dependent DNA helicase RuvB"/>
    <property type="match status" value="1"/>
</dbReference>
<dbReference type="FunFam" id="1.10.8.60:FF:000023">
    <property type="entry name" value="Holliday junction ATP-dependent DNA helicase RuvB"/>
    <property type="match status" value="1"/>
</dbReference>
<dbReference type="FunFam" id="3.40.50.300:FF:000073">
    <property type="entry name" value="Holliday junction ATP-dependent DNA helicase RuvB"/>
    <property type="match status" value="1"/>
</dbReference>
<dbReference type="Gene3D" id="1.10.8.60">
    <property type="match status" value="1"/>
</dbReference>
<dbReference type="Gene3D" id="3.40.50.300">
    <property type="entry name" value="P-loop containing nucleotide triphosphate hydrolases"/>
    <property type="match status" value="1"/>
</dbReference>
<dbReference type="Gene3D" id="1.10.10.10">
    <property type="entry name" value="Winged helix-like DNA-binding domain superfamily/Winged helix DNA-binding domain"/>
    <property type="match status" value="1"/>
</dbReference>
<dbReference type="HAMAP" id="MF_00016">
    <property type="entry name" value="DNA_HJ_migration_RuvB"/>
    <property type="match status" value="1"/>
</dbReference>
<dbReference type="InterPro" id="IPR003593">
    <property type="entry name" value="AAA+_ATPase"/>
</dbReference>
<dbReference type="InterPro" id="IPR041445">
    <property type="entry name" value="AAA_lid_4"/>
</dbReference>
<dbReference type="InterPro" id="IPR004605">
    <property type="entry name" value="DNA_helicase_Holl-junc_RuvB"/>
</dbReference>
<dbReference type="InterPro" id="IPR027417">
    <property type="entry name" value="P-loop_NTPase"/>
</dbReference>
<dbReference type="InterPro" id="IPR008824">
    <property type="entry name" value="RuvB-like_N"/>
</dbReference>
<dbReference type="InterPro" id="IPR008823">
    <property type="entry name" value="RuvB_C"/>
</dbReference>
<dbReference type="InterPro" id="IPR036388">
    <property type="entry name" value="WH-like_DNA-bd_sf"/>
</dbReference>
<dbReference type="InterPro" id="IPR036390">
    <property type="entry name" value="WH_DNA-bd_sf"/>
</dbReference>
<dbReference type="NCBIfam" id="NF000868">
    <property type="entry name" value="PRK00080.1"/>
    <property type="match status" value="1"/>
</dbReference>
<dbReference type="NCBIfam" id="TIGR00635">
    <property type="entry name" value="ruvB"/>
    <property type="match status" value="1"/>
</dbReference>
<dbReference type="PANTHER" id="PTHR42848">
    <property type="match status" value="1"/>
</dbReference>
<dbReference type="PANTHER" id="PTHR42848:SF1">
    <property type="entry name" value="HOLLIDAY JUNCTION BRANCH MIGRATION COMPLEX SUBUNIT RUVB"/>
    <property type="match status" value="1"/>
</dbReference>
<dbReference type="Pfam" id="PF17864">
    <property type="entry name" value="AAA_lid_4"/>
    <property type="match status" value="1"/>
</dbReference>
<dbReference type="Pfam" id="PF05491">
    <property type="entry name" value="RuvB_C"/>
    <property type="match status" value="1"/>
</dbReference>
<dbReference type="Pfam" id="PF05496">
    <property type="entry name" value="RuvB_N"/>
    <property type="match status" value="1"/>
</dbReference>
<dbReference type="SMART" id="SM00382">
    <property type="entry name" value="AAA"/>
    <property type="match status" value="1"/>
</dbReference>
<dbReference type="SUPFAM" id="SSF52540">
    <property type="entry name" value="P-loop containing nucleoside triphosphate hydrolases"/>
    <property type="match status" value="1"/>
</dbReference>
<dbReference type="SUPFAM" id="SSF46785">
    <property type="entry name" value="Winged helix' DNA-binding domain"/>
    <property type="match status" value="1"/>
</dbReference>
<sequence length="334" mass="36760">MIEADRLIQPQLQGQDDVIDRAMRPKLLDEYTGQDDTRAQLKVFIQAAKNREEALDHMLIYGPPGLGKTTLAMIVANEMGVNIKSTSGPVLEKAGDLAALLTNLEAGDVLFIDEIHRLSPVVEEILYPAMEDYQLDIMIGEGPAARSIKLDLPPFTLVGATTRAGALTSPLRARFGIPLRLEFYNVKDLSTIVTRSAQVMGLAIDSEGATEIAKRSRGTPRIANRLLRRVRDYAEVQHDGAVTQNVAELALNLLDVDGEGFDYMDRKLLLAIIDKFMGGPVGLDNLAAAIGEERETIEDVLEPFLIQQGFIQRTPRGRIATARAYVHFGMIKPE</sequence>
<gene>
    <name evidence="1" type="primary">ruvB</name>
    <name type="ordered locus">SO_2429</name>
</gene>